<proteinExistence type="evidence at protein level"/>
<keyword id="KW-0067">ATP-binding</keyword>
<keyword id="KW-0997">Cell inner membrane</keyword>
<keyword id="KW-1003">Cell membrane</keyword>
<keyword id="KW-0406">Ion transport</keyword>
<keyword id="KW-0472">Membrane</keyword>
<keyword id="KW-0547">Nucleotide-binding</keyword>
<keyword id="KW-1185">Reference proteome</keyword>
<keyword id="KW-1278">Translocase</keyword>
<keyword id="KW-0813">Transport</keyword>
<organism>
    <name type="scientific">Synechococcus elongatus (strain ATCC 33912 / PCC 7942 / FACHB-805)</name>
    <name type="common">Anacystis nidulans R2</name>
    <dbReference type="NCBI Taxonomy" id="1140"/>
    <lineage>
        <taxon>Bacteria</taxon>
        <taxon>Bacillati</taxon>
        <taxon>Cyanobacteriota</taxon>
        <taxon>Cyanophyceae</taxon>
        <taxon>Synechococcales</taxon>
        <taxon>Synechococcaceae</taxon>
        <taxon>Synechococcus</taxon>
    </lineage>
</organism>
<gene>
    <name type="primary">cmpD</name>
    <name type="ordered locus">Synpcc7942_1491</name>
</gene>
<comment type="function">
    <text evidence="4">Part of the ABC transporter complex CmpABCD involved in bicarbonate transport. Responsible for energy coupling to the transport system (Probable).</text>
</comment>
<comment type="subunit">
    <text evidence="3">The complex is composed of two ATP-binding proteins (CmpC and CmpD), a transmembrane protein (CmpB) and a solute-binding protein (CmpA).</text>
</comment>
<comment type="subcellular location">
    <subcellularLocation>
        <location evidence="3">Cell inner membrane</location>
        <topology evidence="3">Peripheral membrane protein</topology>
    </subcellularLocation>
</comment>
<comment type="induction">
    <text evidence="2">By carbon dioxide-limited conditions, probably via CmpR.</text>
</comment>
<comment type="similarity">
    <text evidence="3">Belongs to the ABC transporter superfamily. Nitrate/nitrite/cyanate uptake transporter (NitT) (TC 3.A.1.16) family.</text>
</comment>
<feature type="chain" id="PRO_0000341957" description="Bicarbonate transport ATP-binding protein CmpD">
    <location>
        <begin position="1"/>
        <end position="278"/>
    </location>
</feature>
<feature type="domain" description="ABC transporter" evidence="1">
    <location>
        <begin position="21"/>
        <end position="254"/>
    </location>
</feature>
<feature type="binding site" evidence="1">
    <location>
        <begin position="57"/>
        <end position="64"/>
    </location>
    <ligand>
        <name>ATP</name>
        <dbReference type="ChEBI" id="CHEBI:30616"/>
    </ligand>
</feature>
<dbReference type="EC" id="7.6.2.-"/>
<dbReference type="EMBL" id="D26358">
    <property type="protein sequence ID" value="BAA05389.1"/>
    <property type="molecule type" value="Genomic_DNA"/>
</dbReference>
<dbReference type="EMBL" id="CP000100">
    <property type="protein sequence ID" value="ABB57521.1"/>
    <property type="molecule type" value="Genomic_DNA"/>
</dbReference>
<dbReference type="RefSeq" id="WP_011244787.1">
    <property type="nucleotide sequence ID" value="NZ_JACJTX010000004.1"/>
</dbReference>
<dbReference type="SMR" id="Q55108"/>
<dbReference type="STRING" id="1140.Synpcc7942_1491"/>
<dbReference type="TCDB" id="3.A.1.16.3">
    <property type="family name" value="the atp-binding cassette (abc) superfamily"/>
</dbReference>
<dbReference type="PaxDb" id="1140-Synpcc7942_1491"/>
<dbReference type="KEGG" id="syf:Synpcc7942_1491"/>
<dbReference type="eggNOG" id="COG1116">
    <property type="taxonomic scope" value="Bacteria"/>
</dbReference>
<dbReference type="HOGENOM" id="CLU_000604_1_22_3"/>
<dbReference type="OrthoDB" id="450403at2"/>
<dbReference type="Proteomes" id="UP000889800">
    <property type="component" value="Chromosome"/>
</dbReference>
<dbReference type="GO" id="GO:0005886">
    <property type="term" value="C:plasma membrane"/>
    <property type="evidence" value="ECO:0007669"/>
    <property type="project" value="UniProtKB-SubCell"/>
</dbReference>
<dbReference type="GO" id="GO:0005524">
    <property type="term" value="F:ATP binding"/>
    <property type="evidence" value="ECO:0007669"/>
    <property type="project" value="UniProtKB-KW"/>
</dbReference>
<dbReference type="GO" id="GO:0016887">
    <property type="term" value="F:ATP hydrolysis activity"/>
    <property type="evidence" value="ECO:0007669"/>
    <property type="project" value="InterPro"/>
</dbReference>
<dbReference type="GO" id="GO:0015112">
    <property type="term" value="F:nitrate transmembrane transporter activity"/>
    <property type="evidence" value="ECO:0007669"/>
    <property type="project" value="InterPro"/>
</dbReference>
<dbReference type="GO" id="GO:0006811">
    <property type="term" value="P:monoatomic ion transport"/>
    <property type="evidence" value="ECO:0007669"/>
    <property type="project" value="UniProtKB-KW"/>
</dbReference>
<dbReference type="CDD" id="cd03293">
    <property type="entry name" value="ABC_NrtD_SsuB_transporters"/>
    <property type="match status" value="1"/>
</dbReference>
<dbReference type="Gene3D" id="3.40.50.300">
    <property type="entry name" value="P-loop containing nucleotide triphosphate hydrolases"/>
    <property type="match status" value="1"/>
</dbReference>
<dbReference type="InterPro" id="IPR003593">
    <property type="entry name" value="AAA+_ATPase"/>
</dbReference>
<dbReference type="InterPro" id="IPR003439">
    <property type="entry name" value="ABC_transporter-like_ATP-bd"/>
</dbReference>
<dbReference type="InterPro" id="IPR017871">
    <property type="entry name" value="ABC_transporter-like_CS"/>
</dbReference>
<dbReference type="InterPro" id="IPR050166">
    <property type="entry name" value="ABC_transporter_ATP-bind"/>
</dbReference>
<dbReference type="InterPro" id="IPR005890">
    <property type="entry name" value="NO3_transporter_ATP-bd-like"/>
</dbReference>
<dbReference type="InterPro" id="IPR027417">
    <property type="entry name" value="P-loop_NTPase"/>
</dbReference>
<dbReference type="NCBIfam" id="TIGR01184">
    <property type="entry name" value="ntrCD"/>
    <property type="match status" value="1"/>
</dbReference>
<dbReference type="PANTHER" id="PTHR42788:SF7">
    <property type="entry name" value="NITRATE ABC TRANSPORTER ATP-BINDING PROTEIN"/>
    <property type="match status" value="1"/>
</dbReference>
<dbReference type="PANTHER" id="PTHR42788">
    <property type="entry name" value="TAURINE IMPORT ATP-BINDING PROTEIN-RELATED"/>
    <property type="match status" value="1"/>
</dbReference>
<dbReference type="Pfam" id="PF00005">
    <property type="entry name" value="ABC_tran"/>
    <property type="match status" value="1"/>
</dbReference>
<dbReference type="SMART" id="SM00382">
    <property type="entry name" value="AAA"/>
    <property type="match status" value="1"/>
</dbReference>
<dbReference type="SUPFAM" id="SSF52540">
    <property type="entry name" value="P-loop containing nucleoside triphosphate hydrolases"/>
    <property type="match status" value="1"/>
</dbReference>
<dbReference type="PROSITE" id="PS00211">
    <property type="entry name" value="ABC_TRANSPORTER_1"/>
    <property type="match status" value="1"/>
</dbReference>
<dbReference type="PROSITE" id="PS50893">
    <property type="entry name" value="ABC_TRANSPORTER_2"/>
    <property type="match status" value="1"/>
</dbReference>
<protein>
    <recommendedName>
        <fullName>Bicarbonate transport ATP-binding protein CmpD</fullName>
        <ecNumber>7.6.2.-</ecNumber>
    </recommendedName>
</protein>
<sequence length="278" mass="31541">MQTLRQQQPIVPSSPGHDPFLIVENVSKIYETPKGPYTVLDGVNLTVQEGEFICVIGHSGCGKSTLLNMVSGFNQPSHGSVRLKGKEIDRPGPDRMVVFQNYALLPWMTAYENVYLAVDCVNPQMREGEKREIVREHLAMVGLTEAAEKKITQISGGMKQRVAIARALSIRPEVLILDEPFGALDAITKEELQEELLKIWNDHRCTVLMITHDIDEALFLADRLVMMTNGPAANIGEIMTIPFPRPRDRERIMEDPQYYDLRNYALDFLYNRFAHDDE</sequence>
<evidence type="ECO:0000255" key="1">
    <source>
        <dbReference type="PROSITE-ProRule" id="PRU00434"/>
    </source>
</evidence>
<evidence type="ECO:0000269" key="2">
    <source>
    </source>
</evidence>
<evidence type="ECO:0000305" key="3"/>
<evidence type="ECO:0000305" key="4">
    <source>
    </source>
</evidence>
<name>CMPD_SYNE7</name>
<accession>Q55108</accession>
<accession>Q31N48</accession>
<reference key="1">
    <citation type="submission" date="1993-12" db="EMBL/GenBank/DDBJ databases">
        <authorList>
            <person name="Omata T."/>
        </authorList>
    </citation>
    <scope>NUCLEOTIDE SEQUENCE [GENOMIC DNA]</scope>
</reference>
<reference key="2">
    <citation type="submission" date="2005-08" db="EMBL/GenBank/DDBJ databases">
        <title>Complete sequence of chromosome 1 of Synechococcus elongatus PCC 7942.</title>
        <authorList>
            <consortium name="US DOE Joint Genome Institute"/>
            <person name="Copeland A."/>
            <person name="Lucas S."/>
            <person name="Lapidus A."/>
            <person name="Barry K."/>
            <person name="Detter J.C."/>
            <person name="Glavina T."/>
            <person name="Hammon N."/>
            <person name="Israni S."/>
            <person name="Pitluck S."/>
            <person name="Schmutz J."/>
            <person name="Larimer F."/>
            <person name="Land M."/>
            <person name="Kyrpides N."/>
            <person name="Lykidis A."/>
            <person name="Golden S."/>
            <person name="Richardson P."/>
        </authorList>
    </citation>
    <scope>NUCLEOTIDE SEQUENCE [LARGE SCALE GENOMIC DNA]</scope>
    <source>
        <strain>ATCC 33912 / PCC 7942 / FACHB-805</strain>
    </source>
</reference>
<reference key="3">
    <citation type="journal article" date="1999" name="Proc. Natl. Acad. Sci. U.S.A.">
        <title>Identification of an ATP-binding cassette transporter involved in bicarbonate uptake in the cyanobacterium Synechococcus sp. strain PCC 7942.</title>
        <authorList>
            <person name="Omata T."/>
            <person name="Price G.D."/>
            <person name="Badger M.R."/>
            <person name="Okamura M."/>
            <person name="Gohta S."/>
            <person name="Ogawa T."/>
        </authorList>
    </citation>
    <scope>FUNCTION IN BICARBONATE TRANSPORT</scope>
    <scope>INDUCTION</scope>
</reference>
<reference key="4">
    <citation type="journal article" date="2001" name="J. Bacteriol.">
        <title>Involvement of a CbbR homolog in low CO2-induced activation of the bicarbonate transporter operon in cyanobacteria.</title>
        <authorList>
            <person name="Omata T."/>
            <person name="Gohta S."/>
            <person name="Takahashi Y."/>
            <person name="Harano Y."/>
            <person name="Maeda S."/>
        </authorList>
    </citation>
    <scope>REGULATION BY CMPR</scope>
</reference>